<organism>
    <name type="scientific">Gloeothece citriformis (strain PCC 7424)</name>
    <name type="common">Cyanothece sp. (strain PCC 7424)</name>
    <dbReference type="NCBI Taxonomy" id="65393"/>
    <lineage>
        <taxon>Bacteria</taxon>
        <taxon>Bacillati</taxon>
        <taxon>Cyanobacteriota</taxon>
        <taxon>Cyanophyceae</taxon>
        <taxon>Oscillatoriophycideae</taxon>
        <taxon>Chroococcales</taxon>
        <taxon>Aphanothecaceae</taxon>
        <taxon>Gloeothece</taxon>
        <taxon>Gloeothece citriformis</taxon>
    </lineage>
</organism>
<evidence type="ECO:0000255" key="1">
    <source>
        <dbReference type="HAMAP-Rule" id="MF_00072"/>
    </source>
</evidence>
<dbReference type="EMBL" id="CP001291">
    <property type="protein sequence ID" value="ACK70275.1"/>
    <property type="molecule type" value="Genomic_DNA"/>
</dbReference>
<dbReference type="RefSeq" id="WP_012599218.1">
    <property type="nucleotide sequence ID" value="NC_011729.1"/>
</dbReference>
<dbReference type="SMR" id="B7KCH0"/>
<dbReference type="STRING" id="65393.PCC7424_1843"/>
<dbReference type="KEGG" id="cyc:PCC7424_1843"/>
<dbReference type="eggNOG" id="COG4108">
    <property type="taxonomic scope" value="Bacteria"/>
</dbReference>
<dbReference type="HOGENOM" id="CLU_002794_2_1_3"/>
<dbReference type="OrthoDB" id="580826at2"/>
<dbReference type="Proteomes" id="UP000002384">
    <property type="component" value="Chromosome"/>
</dbReference>
<dbReference type="GO" id="GO:0005829">
    <property type="term" value="C:cytosol"/>
    <property type="evidence" value="ECO:0007669"/>
    <property type="project" value="TreeGrafter"/>
</dbReference>
<dbReference type="GO" id="GO:0005525">
    <property type="term" value="F:GTP binding"/>
    <property type="evidence" value="ECO:0007669"/>
    <property type="project" value="UniProtKB-UniRule"/>
</dbReference>
<dbReference type="GO" id="GO:0003924">
    <property type="term" value="F:GTPase activity"/>
    <property type="evidence" value="ECO:0007669"/>
    <property type="project" value="InterPro"/>
</dbReference>
<dbReference type="GO" id="GO:0016150">
    <property type="term" value="F:translation release factor activity, codon nonspecific"/>
    <property type="evidence" value="ECO:0007669"/>
    <property type="project" value="TreeGrafter"/>
</dbReference>
<dbReference type="GO" id="GO:0016149">
    <property type="term" value="F:translation release factor activity, codon specific"/>
    <property type="evidence" value="ECO:0007669"/>
    <property type="project" value="UniProtKB-UniRule"/>
</dbReference>
<dbReference type="GO" id="GO:0006449">
    <property type="term" value="P:regulation of translational termination"/>
    <property type="evidence" value="ECO:0007669"/>
    <property type="project" value="UniProtKB-UniRule"/>
</dbReference>
<dbReference type="CDD" id="cd04169">
    <property type="entry name" value="RF3"/>
    <property type="match status" value="1"/>
</dbReference>
<dbReference type="CDD" id="cd03689">
    <property type="entry name" value="RF3_II"/>
    <property type="match status" value="1"/>
</dbReference>
<dbReference type="FunFam" id="2.40.30.10:FF:000040">
    <property type="entry name" value="Peptide chain release factor 3"/>
    <property type="match status" value="1"/>
</dbReference>
<dbReference type="FunFam" id="3.30.70.3280:FF:000001">
    <property type="entry name" value="Peptide chain release factor 3"/>
    <property type="match status" value="1"/>
</dbReference>
<dbReference type="FunFam" id="3.40.50.300:FF:000542">
    <property type="entry name" value="Peptide chain release factor 3"/>
    <property type="match status" value="1"/>
</dbReference>
<dbReference type="Gene3D" id="3.40.50.300">
    <property type="entry name" value="P-loop containing nucleotide triphosphate hydrolases"/>
    <property type="match status" value="1"/>
</dbReference>
<dbReference type="Gene3D" id="3.30.70.3280">
    <property type="entry name" value="Peptide chain release factor 3, domain III"/>
    <property type="match status" value="1"/>
</dbReference>
<dbReference type="Gene3D" id="2.40.30.10">
    <property type="entry name" value="Translation factors"/>
    <property type="match status" value="1"/>
</dbReference>
<dbReference type="HAMAP" id="MF_00072">
    <property type="entry name" value="Rel_fac_3"/>
    <property type="match status" value="1"/>
</dbReference>
<dbReference type="InterPro" id="IPR053905">
    <property type="entry name" value="EF-G-like_DII"/>
</dbReference>
<dbReference type="InterPro" id="IPR035647">
    <property type="entry name" value="EFG_III/V"/>
</dbReference>
<dbReference type="InterPro" id="IPR031157">
    <property type="entry name" value="G_TR_CS"/>
</dbReference>
<dbReference type="InterPro" id="IPR027417">
    <property type="entry name" value="P-loop_NTPase"/>
</dbReference>
<dbReference type="InterPro" id="IPR004548">
    <property type="entry name" value="PrfC"/>
</dbReference>
<dbReference type="InterPro" id="IPR032090">
    <property type="entry name" value="RF3_C"/>
</dbReference>
<dbReference type="InterPro" id="IPR038467">
    <property type="entry name" value="RF3_dom_3_sf"/>
</dbReference>
<dbReference type="InterPro" id="IPR041732">
    <property type="entry name" value="RF3_GTP-bd"/>
</dbReference>
<dbReference type="InterPro" id="IPR005225">
    <property type="entry name" value="Small_GTP-bd"/>
</dbReference>
<dbReference type="InterPro" id="IPR000795">
    <property type="entry name" value="T_Tr_GTP-bd_dom"/>
</dbReference>
<dbReference type="InterPro" id="IPR009000">
    <property type="entry name" value="Transl_B-barrel_sf"/>
</dbReference>
<dbReference type="NCBIfam" id="TIGR00503">
    <property type="entry name" value="prfC"/>
    <property type="match status" value="1"/>
</dbReference>
<dbReference type="NCBIfam" id="NF001964">
    <property type="entry name" value="PRK00741.1"/>
    <property type="match status" value="1"/>
</dbReference>
<dbReference type="NCBIfam" id="TIGR00231">
    <property type="entry name" value="small_GTP"/>
    <property type="match status" value="1"/>
</dbReference>
<dbReference type="PANTHER" id="PTHR43556">
    <property type="entry name" value="PEPTIDE CHAIN RELEASE FACTOR RF3"/>
    <property type="match status" value="1"/>
</dbReference>
<dbReference type="PANTHER" id="PTHR43556:SF2">
    <property type="entry name" value="PEPTIDE CHAIN RELEASE FACTOR RF3"/>
    <property type="match status" value="1"/>
</dbReference>
<dbReference type="Pfam" id="PF22042">
    <property type="entry name" value="EF-G_D2"/>
    <property type="match status" value="1"/>
</dbReference>
<dbReference type="Pfam" id="PF00009">
    <property type="entry name" value="GTP_EFTU"/>
    <property type="match status" value="1"/>
</dbReference>
<dbReference type="Pfam" id="PF16658">
    <property type="entry name" value="RF3_C"/>
    <property type="match status" value="1"/>
</dbReference>
<dbReference type="PRINTS" id="PR00315">
    <property type="entry name" value="ELONGATNFCT"/>
</dbReference>
<dbReference type="SUPFAM" id="SSF54980">
    <property type="entry name" value="EF-G C-terminal domain-like"/>
    <property type="match status" value="1"/>
</dbReference>
<dbReference type="SUPFAM" id="SSF52540">
    <property type="entry name" value="P-loop containing nucleoside triphosphate hydrolases"/>
    <property type="match status" value="1"/>
</dbReference>
<dbReference type="SUPFAM" id="SSF50447">
    <property type="entry name" value="Translation proteins"/>
    <property type="match status" value="1"/>
</dbReference>
<dbReference type="PROSITE" id="PS00301">
    <property type="entry name" value="G_TR_1"/>
    <property type="match status" value="1"/>
</dbReference>
<dbReference type="PROSITE" id="PS51722">
    <property type="entry name" value="G_TR_2"/>
    <property type="match status" value="1"/>
</dbReference>
<keyword id="KW-0963">Cytoplasm</keyword>
<keyword id="KW-0342">GTP-binding</keyword>
<keyword id="KW-0547">Nucleotide-binding</keyword>
<keyword id="KW-0648">Protein biosynthesis</keyword>
<keyword id="KW-1185">Reference proteome</keyword>
<gene>
    <name evidence="1" type="primary">prfC</name>
    <name type="ordered locus">PCC7424_1843</name>
</gene>
<comment type="function">
    <text evidence="1">Increases the formation of ribosomal termination complexes and stimulates activities of RF-1 and RF-2. It binds guanine nucleotides and has strong preference for UGA stop codons. It may interact directly with the ribosome. The stimulation of RF-1 and RF-2 is significantly reduced by GTP and GDP, but not by GMP.</text>
</comment>
<comment type="subcellular location">
    <subcellularLocation>
        <location evidence="1">Cytoplasm</location>
    </subcellularLocation>
</comment>
<comment type="similarity">
    <text evidence="1">Belongs to the TRAFAC class translation factor GTPase superfamily. Classic translation factor GTPase family. PrfC subfamily.</text>
</comment>
<accession>B7KCH0</accession>
<reference key="1">
    <citation type="journal article" date="2011" name="MBio">
        <title>Novel metabolic attributes of the genus Cyanothece, comprising a group of unicellular nitrogen-fixing Cyanobacteria.</title>
        <authorList>
            <person name="Bandyopadhyay A."/>
            <person name="Elvitigala T."/>
            <person name="Welsh E."/>
            <person name="Stockel J."/>
            <person name="Liberton M."/>
            <person name="Min H."/>
            <person name="Sherman L.A."/>
            <person name="Pakrasi H.B."/>
        </authorList>
    </citation>
    <scope>NUCLEOTIDE SEQUENCE [LARGE SCALE GENOMIC DNA]</scope>
    <source>
        <strain>PCC 7424</strain>
    </source>
</reference>
<name>RF3_GLOC7</name>
<proteinExistence type="inferred from homology"/>
<feature type="chain" id="PRO_1000202465" description="Peptide chain release factor 3">
    <location>
        <begin position="1"/>
        <end position="540"/>
    </location>
</feature>
<feature type="domain" description="tr-type G">
    <location>
        <begin position="14"/>
        <end position="283"/>
    </location>
</feature>
<feature type="binding site" evidence="1">
    <location>
        <begin position="23"/>
        <end position="30"/>
    </location>
    <ligand>
        <name>GTP</name>
        <dbReference type="ChEBI" id="CHEBI:37565"/>
    </ligand>
</feature>
<feature type="binding site" evidence="1">
    <location>
        <begin position="91"/>
        <end position="95"/>
    </location>
    <ligand>
        <name>GTP</name>
        <dbReference type="ChEBI" id="CHEBI:37565"/>
    </ligand>
</feature>
<feature type="binding site" evidence="1">
    <location>
        <begin position="145"/>
        <end position="148"/>
    </location>
    <ligand>
        <name>GTP</name>
        <dbReference type="ChEBI" id="CHEBI:37565"/>
    </ligand>
</feature>
<protein>
    <recommendedName>
        <fullName evidence="1">Peptide chain release factor 3</fullName>
        <shortName evidence="1">RF-3</shortName>
    </recommendedName>
</protein>
<sequence>MTTEIQLELEQAVNQRRNFAIISHPDAGKTTLTEKLLLYGGAIHQAGAVKARRDQRKATSDWMEMEKQRGISITSTVLQFDYKNIQINLLDTPGHQDFSEDTYRTLAAADNAVMLIDAAKGLEPQTRKLFEVCKLRALPIFTFVNKLDRPGREPLELLDEIEQELGLQIYAVNWPIGIGDRFKGVYDRRSKAIHLFERRAHGSQEAQETVIQLGDPKIEEYLEQDLYYQLKEDLEILEEIGADLDLEKVHSGQMTPIFFGSAMTNFGVKLFLEAFLDYALKPIGRNSSVGLVDPSYPEFSGFVFKLQANMDPKHRDRVAFVRVCTGKFEKDMTVNHARTGKTVRLSRPQKLFAQDRASIEEAYPGDVIGLNNPGVFAIGDTIYNGKKLEYEGIPCFSPELFSYLKNPNPSKFKQFQKGIQELTEEGAIQIMFSTDDFIRDPILAAVGQLQFEVVQFRMLSEYGVETRLEPLSYSLARWVAGGWKAIEEAGRIFNTMTVKDGWGRPVLLFKNEWNLQQVKEDHPKLELTSIAPVGSGIQPS</sequence>